<evidence type="ECO:0000250" key="1"/>
<evidence type="ECO:0000250" key="2">
    <source>
        <dbReference type="UniProtKB" id="P60766"/>
    </source>
</evidence>
<evidence type="ECO:0000250" key="3">
    <source>
        <dbReference type="UniProtKB" id="P60953"/>
    </source>
</evidence>
<evidence type="ECO:0000250" key="4">
    <source>
        <dbReference type="UniProtKB" id="Q8CFN2"/>
    </source>
</evidence>
<evidence type="ECO:0000255" key="5"/>
<evidence type="ECO:0000303" key="6">
    <source ref="1"/>
</evidence>
<evidence type="ECO:0000305" key="7"/>
<accession>P60952</accession>
<accession>P21181</accession>
<accession>P25763</accession>
<sequence>MQTIKCVVVGDGAVGKTCLLISYTTNKFPSEYVPTVFDNYAVTVMIGGEPYTLGLFDTAGQEDYDRLRPLSYPQTDVFLVCFSVVSPSSFENVKEKWVPEITHHCPKTPFLLVGTQIDLRDDPSTIEKLAKNKQKPITPETAEKLARDLKAVKYVECSALTQKGLKNVFDEAILAALEPPEPKKSRRCVLL</sequence>
<proteinExistence type="evidence at transcript level"/>
<dbReference type="EC" id="3.6.5.2"/>
<dbReference type="EMBL" id="Z49944">
    <property type="protein sequence ID" value="CAA90215.1"/>
    <property type="molecule type" value="mRNA"/>
</dbReference>
<dbReference type="PIR" id="S57563">
    <property type="entry name" value="S57563"/>
</dbReference>
<dbReference type="RefSeq" id="NP_001003254.1">
    <property type="nucleotide sequence ID" value="NM_001003254.2"/>
</dbReference>
<dbReference type="RefSeq" id="XP_038319240.1">
    <molecule id="P60952-2"/>
    <property type="nucleotide sequence ID" value="XM_038463312.1"/>
</dbReference>
<dbReference type="RefSeq" id="XP_038319242.1">
    <molecule id="P60952-1"/>
    <property type="nucleotide sequence ID" value="XM_038463314.1"/>
</dbReference>
<dbReference type="RefSeq" id="XP_038387602.1">
    <molecule id="P60952-2"/>
    <property type="nucleotide sequence ID" value="XM_038531674.1"/>
</dbReference>
<dbReference type="RefSeq" id="XP_038387603.1">
    <molecule id="P60952-1"/>
    <property type="nucleotide sequence ID" value="XM_038531675.1"/>
</dbReference>
<dbReference type="RefSeq" id="XP_038515912.1">
    <molecule id="P60952-2"/>
    <property type="nucleotide sequence ID" value="XM_038659984.1"/>
</dbReference>
<dbReference type="RefSeq" id="XP_038515913.1">
    <molecule id="P60952-1"/>
    <property type="nucleotide sequence ID" value="XM_038659985.1"/>
</dbReference>
<dbReference type="BMRB" id="P60952"/>
<dbReference type="SMR" id="P60952"/>
<dbReference type="CORUM" id="P60952"/>
<dbReference type="FunCoup" id="P60952">
    <property type="interactions" value="3531"/>
</dbReference>
<dbReference type="STRING" id="9615.ENSCAFP00000060180"/>
<dbReference type="PaxDb" id="9612-ENSCAFP00000021683"/>
<dbReference type="Ensembl" id="ENSCAFT00000023350.6">
    <molecule id="P60952-2"/>
    <property type="protein sequence ID" value="ENSCAFP00000021683.3"/>
    <property type="gene ID" value="ENSCAFG00000014707.6"/>
</dbReference>
<dbReference type="Ensembl" id="ENSCAFT00000023351.5">
    <molecule id="P60952-1"/>
    <property type="protein sequence ID" value="ENSCAFP00000021684.3"/>
    <property type="gene ID" value="ENSCAFG00000014707.6"/>
</dbReference>
<dbReference type="Ensembl" id="ENSCAFT00030003966.1">
    <molecule id="P60952-2"/>
    <property type="protein sequence ID" value="ENSCAFP00030003518.1"/>
    <property type="gene ID" value="ENSCAFG00030002163.1"/>
</dbReference>
<dbReference type="Ensembl" id="ENSCAFT00030003973.1">
    <molecule id="P60952-1"/>
    <property type="protein sequence ID" value="ENSCAFP00030003524.1"/>
    <property type="gene ID" value="ENSCAFG00030002163.1"/>
</dbReference>
<dbReference type="Ensembl" id="ENSCAFT00040003456.1">
    <molecule id="P60952-2"/>
    <property type="protein sequence ID" value="ENSCAFP00040002961.1"/>
    <property type="gene ID" value="ENSCAFG00040001840.1"/>
</dbReference>
<dbReference type="Ensembl" id="ENSCAFT00040004651.1">
    <molecule id="P60952-2"/>
    <property type="protein sequence ID" value="ENSCAFP00040003996.1"/>
    <property type="gene ID" value="ENSCAFG00040002443.1"/>
</dbReference>
<dbReference type="Ensembl" id="ENSCAFT00040004656.1">
    <molecule id="P60952-1"/>
    <property type="protein sequence ID" value="ENSCAFP00040004001.1"/>
    <property type="gene ID" value="ENSCAFG00040002443.1"/>
</dbReference>
<dbReference type="Ensembl" id="ENSCAFT00845001325.1">
    <molecule id="P60952-2"/>
    <property type="protein sequence ID" value="ENSCAFP00845001022.1"/>
    <property type="gene ID" value="ENSCAFG00845000796.1"/>
</dbReference>
<dbReference type="Ensembl" id="ENSCAFT00845001333.1">
    <molecule id="P60952-1"/>
    <property type="protein sequence ID" value="ENSCAFP00845001027.1"/>
    <property type="gene ID" value="ENSCAFG00845000796.1"/>
</dbReference>
<dbReference type="GeneID" id="119863888"/>
<dbReference type="VEuPathDB" id="HostDB:ENSCAFG00845000796"/>
<dbReference type="eggNOG" id="KOG0393">
    <property type="taxonomic scope" value="Eukaryota"/>
</dbReference>
<dbReference type="GeneTree" id="ENSGT00940000153675"/>
<dbReference type="HOGENOM" id="CLU_041217_21_3_1"/>
<dbReference type="InParanoid" id="P60952"/>
<dbReference type="OMA" id="GDEPYTF"/>
<dbReference type="OrthoDB" id="8830751at2759"/>
<dbReference type="TreeFam" id="TF101109"/>
<dbReference type="Reactome" id="R-CFA-114604">
    <property type="pathway name" value="GPVI-mediated activation cascade"/>
</dbReference>
<dbReference type="Reactome" id="R-CFA-182971">
    <property type="pathway name" value="EGFR downregulation"/>
</dbReference>
<dbReference type="Reactome" id="R-CFA-2029482">
    <property type="pathway name" value="Regulation of actin dynamics for phagocytic cup formation"/>
</dbReference>
<dbReference type="Reactome" id="R-CFA-389359">
    <property type="pathway name" value="CD28 dependent Vav1 pathway"/>
</dbReference>
<dbReference type="Reactome" id="R-CFA-3928662">
    <property type="pathway name" value="EPHB-mediated forward signaling"/>
</dbReference>
<dbReference type="Reactome" id="R-CFA-418885">
    <property type="pathway name" value="DCC mediated attractive signaling"/>
</dbReference>
<dbReference type="Reactome" id="R-CFA-4420097">
    <property type="pathway name" value="VEGFA-VEGFR2 Pathway"/>
</dbReference>
<dbReference type="Reactome" id="R-CFA-525793">
    <property type="pathway name" value="Myogenesis"/>
</dbReference>
<dbReference type="Reactome" id="R-CFA-5625970">
    <property type="pathway name" value="RHO GTPases activate KTN1"/>
</dbReference>
<dbReference type="Reactome" id="R-CFA-5626467">
    <property type="pathway name" value="RHO GTPases activate IQGAPs"/>
</dbReference>
<dbReference type="Reactome" id="R-CFA-5627123">
    <property type="pathway name" value="RHO GTPases activate PAKs"/>
</dbReference>
<dbReference type="Reactome" id="R-CFA-5663213">
    <property type="pathway name" value="RHO GTPases Activate WASPs and WAVEs"/>
</dbReference>
<dbReference type="Reactome" id="R-CFA-5663220">
    <property type="pathway name" value="RHO GTPases Activate Formins"/>
</dbReference>
<dbReference type="Reactome" id="R-CFA-5687128">
    <property type="pathway name" value="MAPK6/MAPK4 signaling"/>
</dbReference>
<dbReference type="Reactome" id="R-CFA-8964616">
    <property type="pathway name" value="G beta:gamma signalling through CDC42"/>
</dbReference>
<dbReference type="Reactome" id="R-CFA-9013148">
    <property type="pathway name" value="CDC42 GTPase cycle"/>
</dbReference>
<dbReference type="Reactome" id="R-CFA-9013149">
    <property type="pathway name" value="RAC1 GTPase cycle"/>
</dbReference>
<dbReference type="Reactome" id="R-CFA-9013404">
    <property type="pathway name" value="RAC2 GTPase cycle"/>
</dbReference>
<dbReference type="Reactome" id="R-CFA-9013406">
    <property type="pathway name" value="RHOQ GTPase cycle"/>
</dbReference>
<dbReference type="Reactome" id="R-CFA-9013408">
    <property type="pathway name" value="RHOG GTPase cycle"/>
</dbReference>
<dbReference type="Reactome" id="R-CFA-9013420">
    <property type="pathway name" value="RHOU GTPase cycle"/>
</dbReference>
<dbReference type="Reactome" id="R-CFA-9013423">
    <property type="pathway name" value="RAC3 GTPase cycle"/>
</dbReference>
<dbReference type="Reactome" id="R-CFA-9013424">
    <property type="pathway name" value="RHOV GTPase cycle"/>
</dbReference>
<dbReference type="Reactome" id="R-CFA-983231">
    <property type="pathway name" value="Factors involved in megakaryocyte development and platelet production"/>
</dbReference>
<dbReference type="Proteomes" id="UP000002254">
    <property type="component" value="Chromosome 2"/>
</dbReference>
<dbReference type="Proteomes" id="UP000694429">
    <property type="component" value="Chromosome 2"/>
</dbReference>
<dbReference type="Proteomes" id="UP000694542">
    <property type="component" value="Chromosome 2"/>
</dbReference>
<dbReference type="Proteomes" id="UP000694542">
    <property type="component" value="Chromosome 4"/>
</dbReference>
<dbReference type="Proteomes" id="UP000805418">
    <property type="component" value="Chromosome 2"/>
</dbReference>
<dbReference type="Bgee" id="ENSCAFG00000014707">
    <property type="expression patterns" value="Expressed in lymph node and 45 other cell types or tissues"/>
</dbReference>
<dbReference type="GO" id="GO:0005813">
    <property type="term" value="C:centrosome"/>
    <property type="evidence" value="ECO:0007669"/>
    <property type="project" value="UniProtKB-SubCell"/>
</dbReference>
<dbReference type="GO" id="GO:0005737">
    <property type="term" value="C:cytoplasm"/>
    <property type="evidence" value="ECO:0007669"/>
    <property type="project" value="UniProtKB-SubCell"/>
</dbReference>
<dbReference type="GO" id="GO:0030425">
    <property type="term" value="C:dendrite"/>
    <property type="evidence" value="ECO:0007669"/>
    <property type="project" value="UniProtKB-SubCell"/>
</dbReference>
<dbReference type="GO" id="GO:0031258">
    <property type="term" value="C:lamellipodium membrane"/>
    <property type="evidence" value="ECO:0007669"/>
    <property type="project" value="UniProtKB-SubCell"/>
</dbReference>
<dbReference type="GO" id="GO:0016020">
    <property type="term" value="C:membrane"/>
    <property type="evidence" value="ECO:0000250"/>
    <property type="project" value="UniProtKB"/>
</dbReference>
<dbReference type="GO" id="GO:0030496">
    <property type="term" value="C:midbody"/>
    <property type="evidence" value="ECO:0000250"/>
    <property type="project" value="UniProtKB"/>
</dbReference>
<dbReference type="GO" id="GO:0072686">
    <property type="term" value="C:mitotic spindle"/>
    <property type="evidence" value="ECO:0000250"/>
    <property type="project" value="UniProtKB"/>
</dbReference>
<dbReference type="GO" id="GO:0005886">
    <property type="term" value="C:plasma membrane"/>
    <property type="evidence" value="ECO:0000318"/>
    <property type="project" value="GO_Central"/>
</dbReference>
<dbReference type="GO" id="GO:0051233">
    <property type="term" value="C:spindle midzone"/>
    <property type="evidence" value="ECO:0000250"/>
    <property type="project" value="UniProtKB"/>
</dbReference>
<dbReference type="GO" id="GO:0003925">
    <property type="term" value="F:G protein activity"/>
    <property type="evidence" value="ECO:0007669"/>
    <property type="project" value="UniProtKB-EC"/>
</dbReference>
<dbReference type="GO" id="GO:0005525">
    <property type="term" value="F:GTP binding"/>
    <property type="evidence" value="ECO:0000318"/>
    <property type="project" value="GO_Central"/>
</dbReference>
<dbReference type="GO" id="GO:0003924">
    <property type="term" value="F:GTPase activity"/>
    <property type="evidence" value="ECO:0000318"/>
    <property type="project" value="GO_Central"/>
</dbReference>
<dbReference type="GO" id="GO:0019901">
    <property type="term" value="F:protein kinase binding"/>
    <property type="evidence" value="ECO:0000318"/>
    <property type="project" value="GO_Central"/>
</dbReference>
<dbReference type="GO" id="GO:0007015">
    <property type="term" value="P:actin filament organization"/>
    <property type="evidence" value="ECO:0000250"/>
    <property type="project" value="UniProtKB"/>
</dbReference>
<dbReference type="GO" id="GO:0034329">
    <property type="term" value="P:cell junction assembly"/>
    <property type="evidence" value="ECO:0000250"/>
    <property type="project" value="UniProtKB"/>
</dbReference>
<dbReference type="GO" id="GO:0060997">
    <property type="term" value="P:dendritic spine morphogenesis"/>
    <property type="evidence" value="ECO:0000250"/>
    <property type="project" value="UniProtKB"/>
</dbReference>
<dbReference type="GO" id="GO:0006897">
    <property type="term" value="P:endocytosis"/>
    <property type="evidence" value="ECO:0000318"/>
    <property type="project" value="GO_Central"/>
</dbReference>
<dbReference type="GO" id="GO:0030010">
    <property type="term" value="P:establishment of cell polarity"/>
    <property type="evidence" value="ECO:0000318"/>
    <property type="project" value="GO_Central"/>
</dbReference>
<dbReference type="GO" id="GO:0045198">
    <property type="term" value="P:establishment of epithelial cell apical/basal polarity"/>
    <property type="evidence" value="ECO:0000250"/>
    <property type="project" value="UniProtKB"/>
</dbReference>
<dbReference type="GO" id="GO:0006911">
    <property type="term" value="P:phagocytosis, engulfment"/>
    <property type="evidence" value="ECO:0000250"/>
    <property type="project" value="UniProtKB"/>
</dbReference>
<dbReference type="GO" id="GO:0032467">
    <property type="term" value="P:positive regulation of cytokinesis"/>
    <property type="evidence" value="ECO:0000250"/>
    <property type="project" value="UniProtKB"/>
</dbReference>
<dbReference type="GO" id="GO:0051491">
    <property type="term" value="P:positive regulation of filopodium assembly"/>
    <property type="evidence" value="ECO:0000250"/>
    <property type="project" value="UniProtKB"/>
</dbReference>
<dbReference type="GO" id="GO:0048549">
    <property type="term" value="P:positive regulation of pinocytosis"/>
    <property type="evidence" value="ECO:0000250"/>
    <property type="project" value="UniProtKB"/>
</dbReference>
<dbReference type="GO" id="GO:1900026">
    <property type="term" value="P:positive regulation of substrate adhesion-dependent cell spreading"/>
    <property type="evidence" value="ECO:0000250"/>
    <property type="project" value="UniProtKB"/>
</dbReference>
<dbReference type="GO" id="GO:0051988">
    <property type="term" value="P:regulation of attachment of spindle microtubules to kinetochore"/>
    <property type="evidence" value="ECO:0000250"/>
    <property type="project" value="UniProtKB"/>
</dbReference>
<dbReference type="GO" id="GO:0051489">
    <property type="term" value="P:regulation of filopodium assembly"/>
    <property type="evidence" value="ECO:0000250"/>
    <property type="project" value="UniProtKB"/>
</dbReference>
<dbReference type="GO" id="GO:0007165">
    <property type="term" value="P:signal transduction"/>
    <property type="evidence" value="ECO:0000318"/>
    <property type="project" value="GO_Central"/>
</dbReference>
<dbReference type="GO" id="GO:0007264">
    <property type="term" value="P:small GTPase-mediated signal transduction"/>
    <property type="evidence" value="ECO:0007669"/>
    <property type="project" value="InterPro"/>
</dbReference>
<dbReference type="CDD" id="cd01874">
    <property type="entry name" value="Cdc42"/>
    <property type="match status" value="1"/>
</dbReference>
<dbReference type="FunFam" id="3.40.50.300:FF:000167">
    <property type="entry name" value="Cell division control protein 42 homolog"/>
    <property type="match status" value="1"/>
</dbReference>
<dbReference type="Gene3D" id="3.40.50.300">
    <property type="entry name" value="P-loop containing nucleotide triphosphate hydrolases"/>
    <property type="match status" value="1"/>
</dbReference>
<dbReference type="InterPro" id="IPR037874">
    <property type="entry name" value="Cdc42"/>
</dbReference>
<dbReference type="InterPro" id="IPR027417">
    <property type="entry name" value="P-loop_NTPase"/>
</dbReference>
<dbReference type="InterPro" id="IPR005225">
    <property type="entry name" value="Small_GTP-bd"/>
</dbReference>
<dbReference type="InterPro" id="IPR001806">
    <property type="entry name" value="Small_GTPase"/>
</dbReference>
<dbReference type="InterPro" id="IPR003578">
    <property type="entry name" value="Small_GTPase_Rho"/>
</dbReference>
<dbReference type="NCBIfam" id="TIGR00231">
    <property type="entry name" value="small_GTP"/>
    <property type="match status" value="1"/>
</dbReference>
<dbReference type="PANTHER" id="PTHR24072">
    <property type="entry name" value="RHO FAMILY GTPASE"/>
    <property type="match status" value="1"/>
</dbReference>
<dbReference type="Pfam" id="PF00071">
    <property type="entry name" value="Ras"/>
    <property type="match status" value="1"/>
</dbReference>
<dbReference type="PRINTS" id="PR00449">
    <property type="entry name" value="RASTRNSFRMNG"/>
</dbReference>
<dbReference type="SMART" id="SM00175">
    <property type="entry name" value="RAB"/>
    <property type="match status" value="1"/>
</dbReference>
<dbReference type="SMART" id="SM00173">
    <property type="entry name" value="RAS"/>
    <property type="match status" value="1"/>
</dbReference>
<dbReference type="SMART" id="SM00174">
    <property type="entry name" value="RHO"/>
    <property type="match status" value="1"/>
</dbReference>
<dbReference type="SUPFAM" id="SSF52540">
    <property type="entry name" value="P-loop containing nucleoside triphosphate hydrolases"/>
    <property type="match status" value="1"/>
</dbReference>
<dbReference type="PROSITE" id="PS51420">
    <property type="entry name" value="RHO"/>
    <property type="match status" value="1"/>
</dbReference>
<gene>
    <name type="primary">CDC42</name>
</gene>
<feature type="chain" id="PRO_0000030423" description="Cell division control protein 42 homolog">
    <location>
        <begin position="1"/>
        <end position="188"/>
    </location>
</feature>
<feature type="propeptide" id="PRO_0000030424" description="Removed in mature form">
    <location>
        <begin position="189"/>
        <end position="191"/>
    </location>
</feature>
<feature type="short sequence motif" description="Effector region" evidence="5">
    <location>
        <begin position="32"/>
        <end position="40"/>
    </location>
</feature>
<feature type="binding site" evidence="1">
    <location>
        <begin position="10"/>
        <end position="17"/>
    </location>
    <ligand>
        <name>GTP</name>
        <dbReference type="ChEBI" id="CHEBI:37565"/>
    </ligand>
</feature>
<feature type="binding site" evidence="1">
    <location>
        <begin position="57"/>
        <end position="61"/>
    </location>
    <ligand>
        <name>GTP</name>
        <dbReference type="ChEBI" id="CHEBI:37565"/>
    </ligand>
</feature>
<feature type="binding site" evidence="1">
    <location>
        <begin position="115"/>
        <end position="118"/>
    </location>
    <ligand>
        <name>GTP</name>
        <dbReference type="ChEBI" id="CHEBI:37565"/>
    </ligand>
</feature>
<feature type="modified residue" description="Phosphotyrosine; by SRC" evidence="3">
    <location>
        <position position="64"/>
    </location>
</feature>
<feature type="modified residue" description="Cysteine methyl ester" evidence="1">
    <location>
        <position position="188"/>
    </location>
</feature>
<feature type="lipid moiety-binding region" description="S-geranylgeranyl cysteine" evidence="1">
    <location>
        <position position="188"/>
    </location>
</feature>
<feature type="splice variant" id="VSP_010078" description="In isoform 2." evidence="6">
    <original>K</original>
    <variation>R</variation>
    <location>
        <position position="163"/>
    </location>
</feature>
<feature type="splice variant" id="VSP_010079" description="In isoform 2." evidence="6">
    <original>PKKSRRCVLL</original>
    <variation>TQPKRKCCIF</variation>
    <location>
        <begin position="182"/>
        <end position="191"/>
    </location>
</feature>
<organism>
    <name type="scientific">Canis lupus familiaris</name>
    <name type="common">Dog</name>
    <name type="synonym">Canis familiaris</name>
    <dbReference type="NCBI Taxonomy" id="9615"/>
    <lineage>
        <taxon>Eukaryota</taxon>
        <taxon>Metazoa</taxon>
        <taxon>Chordata</taxon>
        <taxon>Craniata</taxon>
        <taxon>Vertebrata</taxon>
        <taxon>Euteleostomi</taxon>
        <taxon>Mammalia</taxon>
        <taxon>Eutheria</taxon>
        <taxon>Laurasiatheria</taxon>
        <taxon>Carnivora</taxon>
        <taxon>Caniformia</taxon>
        <taxon>Canidae</taxon>
        <taxon>Canis</taxon>
    </lineage>
</organism>
<keyword id="KW-0025">Alternative splicing</keyword>
<keyword id="KW-1003">Cell membrane</keyword>
<keyword id="KW-0966">Cell projection</keyword>
<keyword id="KW-0963">Cytoplasm</keyword>
<keyword id="KW-0206">Cytoskeleton</keyword>
<keyword id="KW-0221">Differentiation</keyword>
<keyword id="KW-0342">GTP-binding</keyword>
<keyword id="KW-0378">Hydrolase</keyword>
<keyword id="KW-0449">Lipoprotein</keyword>
<keyword id="KW-0472">Membrane</keyword>
<keyword id="KW-0488">Methylation</keyword>
<keyword id="KW-0524">Neurogenesis</keyword>
<keyword id="KW-0547">Nucleotide-binding</keyword>
<keyword id="KW-0597">Phosphoprotein</keyword>
<keyword id="KW-0636">Prenylation</keyword>
<keyword id="KW-1185">Reference proteome</keyword>
<name>CDC42_CANLF</name>
<comment type="function">
    <text evidence="2 3 4">Plasma membrane-associated small GTPase which cycles between an active GTP-bound and an inactive GDP-bound state. In active state binds to a variety of effector proteins to regulate cellular responses. Involved in epithelial cell polarization processes. Regulates the bipolar attachment of spindle microtubules to kinetochores before chromosome congression in metaphase. Regulates cell migration. In neurons, plays a role in the extension and maintenance of the formation of filopodia, thin and actin-rich surface projections (By similarity). Required for DOCK10-mediated spine formation in Purkinje cells and hippocampal neurons. Facilitates filopodia formation upon DOCK11-activation (By similarity). Upon activation by CaMKII, modulates dendritic spine structural plasticity by relaying CaMKII transient activation to synapse-specific, long-term signaling (By similarity). Also plays a role in phagocytosis through organization of the F-actin cytoskeleton associated with forming phagocytic cups (By similarity).</text>
</comment>
<comment type="catalytic activity">
    <reaction evidence="2 3">
        <text>GTP + H2O = GDP + phosphate + H(+)</text>
        <dbReference type="Rhea" id="RHEA:19669"/>
        <dbReference type="ChEBI" id="CHEBI:15377"/>
        <dbReference type="ChEBI" id="CHEBI:15378"/>
        <dbReference type="ChEBI" id="CHEBI:37565"/>
        <dbReference type="ChEBI" id="CHEBI:43474"/>
        <dbReference type="ChEBI" id="CHEBI:58189"/>
        <dbReference type="EC" id="3.6.5.2"/>
    </reaction>
    <physiologicalReaction direction="left-to-right" evidence="2 3">
        <dbReference type="Rhea" id="RHEA:19670"/>
    </physiologicalReaction>
</comment>
<comment type="activity regulation">
    <text evidence="3">Regulated by guanine nucleotide exchange factors (GEFs) which promote the exchange of bound GDP for free GTP, GTPase activating proteins (GAPs) which increase the GTP hydrolysis activity, and GDP dissociation inhibitors which inhibit the dissociation of the nucleotide from the GTPase.</text>
</comment>
<comment type="subunit">
    <text evidence="2 3">Interacts with CDC42EP1, CDC42EP2, CDC42EP3, CDC42EP4, CDC42EP5, CDC42SE1, CDC42SE2, PARD6A, PARD6B and PARD6G (in a GTP-dependent manner). Interacts with activated CSPG4 and with BAIAP2. Interacts with DOCK11/Zizimin2; the interaction activates CDC42 by exchanging GDP for GTP. Interacts with DOCK9; the interaction activates CDC42 by exchanging GDP for GTP. Interacts with DOCK8 (via DHR-2 domain); the interaction activates CDC42 by exchanging GDP for GTP. Interacts with IQGAP1. Interacts with NET1 and ARHGAP33/TCGAP. Part of a complex with PARD3, PARD6A or PARD6B and PRKCI or PRKCZ. The GTP-bound form interacts with CCPG1. Interacts with USP6. Interacts with NEK6. Part of a collagen stimulated complex involved in cell migration composed of CDC42, CRK, TNK2 and BCAR1/p130cas. Interacts with ITGB1BP1. Interacts with ARHGDIA; this interaction inactivates and stabilizes CDC42. Interacts with ARHGDIB; this maintains CDC42 in the inactive, GDP-bound form. Interacts in (GTP-bound form) with FNBP1L and ABI1, but only in the presence of FNBP1L. Interacts with MARCKS (By similarity). Interacts with CD151 and ITGB1 (By similarity).</text>
</comment>
<comment type="subcellular location">
    <subcellularLocation>
        <location evidence="2">Cell membrane</location>
        <topology evidence="2">Lipid-anchor</topology>
        <orientation evidence="2">Cytoplasmic side</orientation>
    </subcellularLocation>
    <subcellularLocation>
        <location evidence="3">Midbody</location>
    </subcellularLocation>
    <subcellularLocation>
        <location evidence="3">Cytoplasm</location>
        <location evidence="3">Cytoskeleton</location>
        <location evidence="3">Microtubule organizing center</location>
        <location evidence="3">Centrosome</location>
    </subcellularLocation>
    <subcellularLocation>
        <location evidence="3">Cytoplasm</location>
        <location evidence="3">Cytoskeleton</location>
        <location evidence="3">Spindle</location>
    </subcellularLocation>
    <subcellularLocation>
        <location evidence="2">Cytoplasm</location>
    </subcellularLocation>
    <subcellularLocation>
        <location evidence="2">Cell projection</location>
        <location evidence="2">Lamellipodium membrane</location>
        <topology evidence="2">Peripheral membrane protein</topology>
        <orientation evidence="2">Cytoplasmic side</orientation>
    </subcellularLocation>
    <subcellularLocation>
        <location evidence="2">Cell projection</location>
        <location evidence="2">Dendrite</location>
    </subcellularLocation>
    <text evidence="2 3">Localizes to spindle during prometaphase cells. Moves to the central spindle as cells progressed through anaphase to telophase. Localizes at the end of cytokinesis in the intercellular bridge formed between two daughter cells. Its localization is regulated by the activities of guanine nucleotide exchange factor ECT2 and GTPase activating protein RACGAP1. Colocalizes with NEK6 in the centrosome. In its active GTP-bound form localizes to the leading edge membrane of migrating dendritic cells.</text>
</comment>
<comment type="alternative products">
    <event type="alternative splicing"/>
    <isoform>
        <id>P60952-2</id>
        <id>P21181-4</id>
        <name>1</name>
        <name>Placental</name>
        <sequence type="displayed"/>
    </isoform>
    <isoform>
        <id>P60952-1</id>
        <id>P21181-1</id>
        <name>2</name>
        <name>Brain</name>
        <sequence type="described" ref="VSP_010078 VSP_010079"/>
    </isoform>
</comment>
<comment type="PTM">
    <text evidence="1">Phosphorylated by SRC in an EGF-dependent manner, this stimulates the binding of the Rho-GDP dissociation inhibitor RhoGDI.</text>
</comment>
<comment type="similarity">
    <text evidence="7">Belongs to the small GTPase superfamily. Rho family. CDC42 subfamily.</text>
</comment>
<reference key="1">
    <citation type="submission" date="1995-06" db="EMBL/GenBank/DDBJ databases">
        <title>Cytokinesis arrest and redistribution of actin-cytoskeleton regulatory components induced by the Rho GTPase CDC42Hs.</title>
        <authorList>
            <person name="Dutartre H."/>
            <person name="Davoust J."/>
            <person name="Gorvel J."/>
            <person name="Chavrier P."/>
        </authorList>
    </citation>
    <scope>NUCLEOTIDE SEQUENCE [MRNA] (ISOFORMS 1 AND 2)</scope>
    <source>
        <strain>Cocker spaniel</strain>
        <tissue>Kidney</tissue>
    </source>
</reference>
<protein>
    <recommendedName>
        <fullName>Cell division control protein 42 homolog</fullName>
        <ecNumber>3.6.5.2</ecNumber>
    </recommendedName>
    <alternativeName>
        <fullName>G25K GTP-binding protein</fullName>
    </alternativeName>
</protein>